<keyword id="KW-0066">ATP synthesis</keyword>
<keyword id="KW-1003">Cell membrane</keyword>
<keyword id="KW-0138">CF(0)</keyword>
<keyword id="KW-0375">Hydrogen ion transport</keyword>
<keyword id="KW-0406">Ion transport</keyword>
<keyword id="KW-0472">Membrane</keyword>
<keyword id="KW-1185">Reference proteome</keyword>
<keyword id="KW-0812">Transmembrane</keyword>
<keyword id="KW-1133">Transmembrane helix</keyword>
<keyword id="KW-0813">Transport</keyword>
<name>ATP6_ENTFA</name>
<gene>
    <name evidence="1" type="primary">atpB</name>
    <name type="ordered locus">EF_2614</name>
</gene>
<proteinExistence type="inferred from homology"/>
<protein>
    <recommendedName>
        <fullName evidence="1">ATP synthase subunit a</fullName>
    </recommendedName>
    <alternativeName>
        <fullName evidence="1">ATP synthase F0 sector subunit a</fullName>
    </alternativeName>
    <alternativeName>
        <fullName evidence="1">F-ATPase subunit 6</fullName>
    </alternativeName>
</protein>
<organism>
    <name type="scientific">Enterococcus faecalis (strain ATCC 700802 / V583)</name>
    <dbReference type="NCBI Taxonomy" id="226185"/>
    <lineage>
        <taxon>Bacteria</taxon>
        <taxon>Bacillati</taxon>
        <taxon>Bacillota</taxon>
        <taxon>Bacilli</taxon>
        <taxon>Lactobacillales</taxon>
        <taxon>Enterococcaceae</taxon>
        <taxon>Enterococcus</taxon>
    </lineage>
</organism>
<accession>Q830Z9</accession>
<feature type="chain" id="PRO_1000145275" description="ATP synthase subunit a">
    <location>
        <begin position="1"/>
        <end position="239"/>
    </location>
</feature>
<feature type="transmembrane region" description="Helical" evidence="1">
    <location>
        <begin position="13"/>
        <end position="33"/>
    </location>
</feature>
<feature type="transmembrane region" description="Helical" evidence="1">
    <location>
        <begin position="75"/>
        <end position="95"/>
    </location>
</feature>
<feature type="transmembrane region" description="Helical" evidence="1">
    <location>
        <begin position="113"/>
        <end position="133"/>
    </location>
</feature>
<feature type="transmembrane region" description="Helical" evidence="1">
    <location>
        <begin position="174"/>
        <end position="194"/>
    </location>
</feature>
<feature type="transmembrane region" description="Helical" evidence="1">
    <location>
        <begin position="208"/>
        <end position="230"/>
    </location>
</feature>
<comment type="function">
    <text evidence="1">Key component of the proton channel; it plays a direct role in the translocation of protons across the membrane.</text>
</comment>
<comment type="subunit">
    <text evidence="1">F-type ATPases have 2 components, CF(1) - the catalytic core - and CF(0) - the membrane proton channel. CF(1) has five subunits: alpha(3), beta(3), gamma(1), delta(1), epsilon(1). CF(0) has three main subunits: a(1), b(2) and c(9-12). The alpha and beta chains form an alternating ring which encloses part of the gamma chain. CF(1) is attached to CF(0) by a central stalk formed by the gamma and epsilon chains, while a peripheral stalk is formed by the delta and b chains.</text>
</comment>
<comment type="subcellular location">
    <subcellularLocation>
        <location evidence="1">Cell membrane</location>
        <topology evidence="1">Multi-pass membrane protein</topology>
    </subcellularLocation>
</comment>
<comment type="similarity">
    <text evidence="1">Belongs to the ATPase A chain family.</text>
</comment>
<sequence>MEEKKLLFNIGPIWFDGTIVLMVLLTCIIVFAFVYACTRNMKLRPKGKQTVIEWLVDFIRGIITDNLPRKEVSNFHLMAFTLFMFVLVSNILGLVTKIVVGDDLSVWKSPTADPIVTLTLAMMMIVLTHFFGMKRFGFKGYLVNSYLRPVGFLLPVKLMEEFTNLLTLGLRLYGNIFAGEVLLGLIAGTVASVGLWVIPLAIPLEMIWVAFSIFIGCIQAFIFVTLSMVYMSHKIETEE</sequence>
<evidence type="ECO:0000255" key="1">
    <source>
        <dbReference type="HAMAP-Rule" id="MF_01393"/>
    </source>
</evidence>
<dbReference type="EMBL" id="AE016830">
    <property type="protein sequence ID" value="AAO82323.1"/>
    <property type="molecule type" value="Genomic_DNA"/>
</dbReference>
<dbReference type="RefSeq" id="NP_816253.1">
    <property type="nucleotide sequence ID" value="NC_004668.1"/>
</dbReference>
<dbReference type="RefSeq" id="WP_002356551.1">
    <property type="nucleotide sequence ID" value="NZ_KE136528.1"/>
</dbReference>
<dbReference type="SMR" id="Q830Z9"/>
<dbReference type="STRING" id="226185.EF_2614"/>
<dbReference type="EnsemblBacteria" id="AAO82323">
    <property type="protein sequence ID" value="AAO82323"/>
    <property type="gene ID" value="EF_2614"/>
</dbReference>
<dbReference type="GeneID" id="60894616"/>
<dbReference type="KEGG" id="efa:EF2614"/>
<dbReference type="PATRIC" id="fig|226185.45.peg.942"/>
<dbReference type="eggNOG" id="COG0356">
    <property type="taxonomic scope" value="Bacteria"/>
</dbReference>
<dbReference type="HOGENOM" id="CLU_041018_2_3_9"/>
<dbReference type="Proteomes" id="UP000001415">
    <property type="component" value="Chromosome"/>
</dbReference>
<dbReference type="GO" id="GO:0005886">
    <property type="term" value="C:plasma membrane"/>
    <property type="evidence" value="ECO:0007669"/>
    <property type="project" value="UniProtKB-SubCell"/>
</dbReference>
<dbReference type="GO" id="GO:0045259">
    <property type="term" value="C:proton-transporting ATP synthase complex"/>
    <property type="evidence" value="ECO:0007669"/>
    <property type="project" value="UniProtKB-KW"/>
</dbReference>
<dbReference type="GO" id="GO:0046933">
    <property type="term" value="F:proton-transporting ATP synthase activity, rotational mechanism"/>
    <property type="evidence" value="ECO:0007669"/>
    <property type="project" value="UniProtKB-UniRule"/>
</dbReference>
<dbReference type="GO" id="GO:0042777">
    <property type="term" value="P:proton motive force-driven plasma membrane ATP synthesis"/>
    <property type="evidence" value="ECO:0007669"/>
    <property type="project" value="TreeGrafter"/>
</dbReference>
<dbReference type="CDD" id="cd00310">
    <property type="entry name" value="ATP-synt_Fo_a_6"/>
    <property type="match status" value="1"/>
</dbReference>
<dbReference type="Gene3D" id="1.20.120.220">
    <property type="entry name" value="ATP synthase, F0 complex, subunit A"/>
    <property type="match status" value="1"/>
</dbReference>
<dbReference type="HAMAP" id="MF_01393">
    <property type="entry name" value="ATP_synth_a_bact"/>
    <property type="match status" value="1"/>
</dbReference>
<dbReference type="InterPro" id="IPR045082">
    <property type="entry name" value="ATP_syn_F0_a_bact/chloroplast"/>
</dbReference>
<dbReference type="InterPro" id="IPR000568">
    <property type="entry name" value="ATP_synth_F0_asu"/>
</dbReference>
<dbReference type="InterPro" id="IPR023011">
    <property type="entry name" value="ATP_synth_F0_asu_AS"/>
</dbReference>
<dbReference type="InterPro" id="IPR035908">
    <property type="entry name" value="F0_ATP_A_sf"/>
</dbReference>
<dbReference type="NCBIfam" id="TIGR01131">
    <property type="entry name" value="ATP_synt_6_or_A"/>
    <property type="match status" value="1"/>
</dbReference>
<dbReference type="NCBIfam" id="NF004479">
    <property type="entry name" value="PRK05815.1-4"/>
    <property type="match status" value="1"/>
</dbReference>
<dbReference type="PANTHER" id="PTHR42823">
    <property type="entry name" value="ATP SYNTHASE SUBUNIT A, CHLOROPLASTIC"/>
    <property type="match status" value="1"/>
</dbReference>
<dbReference type="PANTHER" id="PTHR42823:SF3">
    <property type="entry name" value="ATP SYNTHASE SUBUNIT A, CHLOROPLASTIC"/>
    <property type="match status" value="1"/>
</dbReference>
<dbReference type="Pfam" id="PF00119">
    <property type="entry name" value="ATP-synt_A"/>
    <property type="match status" value="1"/>
</dbReference>
<dbReference type="PRINTS" id="PR00123">
    <property type="entry name" value="ATPASEA"/>
</dbReference>
<dbReference type="SUPFAM" id="SSF81336">
    <property type="entry name" value="F1F0 ATP synthase subunit A"/>
    <property type="match status" value="1"/>
</dbReference>
<dbReference type="PROSITE" id="PS00449">
    <property type="entry name" value="ATPASE_A"/>
    <property type="match status" value="1"/>
</dbReference>
<reference key="1">
    <citation type="journal article" date="2003" name="Science">
        <title>Role of mobile DNA in the evolution of vancomycin-resistant Enterococcus faecalis.</title>
        <authorList>
            <person name="Paulsen I.T."/>
            <person name="Banerjei L."/>
            <person name="Myers G.S.A."/>
            <person name="Nelson K.E."/>
            <person name="Seshadri R."/>
            <person name="Read T.D."/>
            <person name="Fouts D.E."/>
            <person name="Eisen J.A."/>
            <person name="Gill S.R."/>
            <person name="Heidelberg J.F."/>
            <person name="Tettelin H."/>
            <person name="Dodson R.J."/>
            <person name="Umayam L.A."/>
            <person name="Brinkac L.M."/>
            <person name="Beanan M.J."/>
            <person name="Daugherty S.C."/>
            <person name="DeBoy R.T."/>
            <person name="Durkin S.A."/>
            <person name="Kolonay J.F."/>
            <person name="Madupu R."/>
            <person name="Nelson W.C."/>
            <person name="Vamathevan J.J."/>
            <person name="Tran B."/>
            <person name="Upton J."/>
            <person name="Hansen T."/>
            <person name="Shetty J."/>
            <person name="Khouri H.M."/>
            <person name="Utterback T.R."/>
            <person name="Radune D."/>
            <person name="Ketchum K.A."/>
            <person name="Dougherty B.A."/>
            <person name="Fraser C.M."/>
        </authorList>
    </citation>
    <scope>NUCLEOTIDE SEQUENCE [LARGE SCALE GENOMIC DNA]</scope>
    <source>
        <strain>ATCC 700802 / V583</strain>
    </source>
</reference>